<gene>
    <name evidence="1" type="primary">rsmC</name>
    <name type="ordered locus">SG4383</name>
</gene>
<comment type="function">
    <text evidence="1">Specifically methylates the guanine in position 1207 of 16S rRNA in the 30S particle.</text>
</comment>
<comment type="catalytic activity">
    <reaction evidence="1">
        <text>guanosine(1207) in 16S rRNA + S-adenosyl-L-methionine = N(2)-methylguanosine(1207) in 16S rRNA + S-adenosyl-L-homocysteine + H(+)</text>
        <dbReference type="Rhea" id="RHEA:42736"/>
        <dbReference type="Rhea" id="RHEA-COMP:10213"/>
        <dbReference type="Rhea" id="RHEA-COMP:10214"/>
        <dbReference type="ChEBI" id="CHEBI:15378"/>
        <dbReference type="ChEBI" id="CHEBI:57856"/>
        <dbReference type="ChEBI" id="CHEBI:59789"/>
        <dbReference type="ChEBI" id="CHEBI:74269"/>
        <dbReference type="ChEBI" id="CHEBI:74481"/>
        <dbReference type="EC" id="2.1.1.172"/>
    </reaction>
</comment>
<comment type="subunit">
    <text evidence="1">Monomer.</text>
</comment>
<comment type="subcellular location">
    <subcellularLocation>
        <location evidence="1">Cytoplasm</location>
    </subcellularLocation>
</comment>
<comment type="similarity">
    <text evidence="1">Belongs to the methyltransferase superfamily. RsmC family.</text>
</comment>
<accession>B5R9T9</accession>
<feature type="chain" id="PRO_0000369756" description="Ribosomal RNA small subunit methyltransferase C">
    <location>
        <begin position="1"/>
        <end position="342"/>
    </location>
</feature>
<proteinExistence type="inferred from homology"/>
<name>RSMC_SALG2</name>
<evidence type="ECO:0000255" key="1">
    <source>
        <dbReference type="HAMAP-Rule" id="MF_01862"/>
    </source>
</evidence>
<keyword id="KW-0963">Cytoplasm</keyword>
<keyword id="KW-0489">Methyltransferase</keyword>
<keyword id="KW-0698">rRNA processing</keyword>
<keyword id="KW-0949">S-adenosyl-L-methionine</keyword>
<keyword id="KW-0808">Transferase</keyword>
<dbReference type="EC" id="2.1.1.172" evidence="1"/>
<dbReference type="EMBL" id="AM933173">
    <property type="protein sequence ID" value="CAR40145.1"/>
    <property type="molecule type" value="Genomic_DNA"/>
</dbReference>
<dbReference type="RefSeq" id="WP_001272274.1">
    <property type="nucleotide sequence ID" value="NC_011274.1"/>
</dbReference>
<dbReference type="SMR" id="B5R9T9"/>
<dbReference type="KEGG" id="seg:SG4383"/>
<dbReference type="HOGENOM" id="CLU_049581_0_1_6"/>
<dbReference type="Proteomes" id="UP000008321">
    <property type="component" value="Chromosome"/>
</dbReference>
<dbReference type="GO" id="GO:0005737">
    <property type="term" value="C:cytoplasm"/>
    <property type="evidence" value="ECO:0007669"/>
    <property type="project" value="UniProtKB-SubCell"/>
</dbReference>
<dbReference type="GO" id="GO:0052914">
    <property type="term" value="F:16S rRNA (guanine(1207)-N(2))-methyltransferase activity"/>
    <property type="evidence" value="ECO:0007669"/>
    <property type="project" value="UniProtKB-EC"/>
</dbReference>
<dbReference type="GO" id="GO:0003676">
    <property type="term" value="F:nucleic acid binding"/>
    <property type="evidence" value="ECO:0007669"/>
    <property type="project" value="InterPro"/>
</dbReference>
<dbReference type="CDD" id="cd02440">
    <property type="entry name" value="AdoMet_MTases"/>
    <property type="match status" value="1"/>
</dbReference>
<dbReference type="FunFam" id="3.40.50.150:FF:000058">
    <property type="entry name" value="Ribosomal RNA small subunit methyltransferase C"/>
    <property type="match status" value="1"/>
</dbReference>
<dbReference type="Gene3D" id="3.40.50.150">
    <property type="entry name" value="Vaccinia Virus protein VP39"/>
    <property type="match status" value="2"/>
</dbReference>
<dbReference type="HAMAP" id="MF_01862">
    <property type="entry name" value="16SrRNA_methyltr_C"/>
    <property type="match status" value="1"/>
</dbReference>
<dbReference type="InterPro" id="IPR002052">
    <property type="entry name" value="DNA_methylase_N6_adenine_CS"/>
</dbReference>
<dbReference type="InterPro" id="IPR013675">
    <property type="entry name" value="Mtase_sm_N"/>
</dbReference>
<dbReference type="InterPro" id="IPR023543">
    <property type="entry name" value="rRNA_ssu_MeTfrase_C"/>
</dbReference>
<dbReference type="InterPro" id="IPR046977">
    <property type="entry name" value="RsmC/RlmG"/>
</dbReference>
<dbReference type="InterPro" id="IPR029063">
    <property type="entry name" value="SAM-dependent_MTases_sf"/>
</dbReference>
<dbReference type="InterPro" id="IPR007848">
    <property type="entry name" value="Small_mtfrase_dom"/>
</dbReference>
<dbReference type="NCBIfam" id="NF007023">
    <property type="entry name" value="PRK09489.1"/>
    <property type="match status" value="1"/>
</dbReference>
<dbReference type="PANTHER" id="PTHR47816">
    <property type="entry name" value="RIBOSOMAL RNA SMALL SUBUNIT METHYLTRANSFERASE C"/>
    <property type="match status" value="1"/>
</dbReference>
<dbReference type="PANTHER" id="PTHR47816:SF4">
    <property type="entry name" value="RIBOSOMAL RNA SMALL SUBUNIT METHYLTRANSFERASE C"/>
    <property type="match status" value="1"/>
</dbReference>
<dbReference type="Pfam" id="PF05175">
    <property type="entry name" value="MTS"/>
    <property type="match status" value="1"/>
</dbReference>
<dbReference type="Pfam" id="PF08468">
    <property type="entry name" value="MTS_N"/>
    <property type="match status" value="1"/>
</dbReference>
<dbReference type="SUPFAM" id="SSF53335">
    <property type="entry name" value="S-adenosyl-L-methionine-dependent methyltransferases"/>
    <property type="match status" value="1"/>
</dbReference>
<protein>
    <recommendedName>
        <fullName evidence="1">Ribosomal RNA small subunit methyltransferase C</fullName>
        <ecNumber evidence="1">2.1.1.172</ecNumber>
    </recommendedName>
    <alternativeName>
        <fullName evidence="1">16S rRNA m2G1207 methyltransferase</fullName>
    </alternativeName>
    <alternativeName>
        <fullName evidence="1">rRNA (guanine-N(2)-)-methyltransferase RsmC</fullName>
    </alternativeName>
</protein>
<sequence length="342" mass="37533">MSAFTPASEVLLRHSDDFEQSRILFAGDLQDDLPARFECAASRAHTQQFHHWQVLSRQMGDNVRFSLVAQASDVADCDTLIYYWPKNKPEAQFQLMNILSLMPSGVDVFVVGENRSGVRSAEPMLADYAPLNKVDSARRCGLYHGRLEKQPQFSLESCWAEYNIDGLTIKTLPGVFSRDGLDVGSQLLLSTLTPHTKGKVLDVGCGAGVLSAALASHSPKVRLTLCDVSAPAVEASRATLAANGLEGEVFASNVFSEVKGRFDMIISNPPFHDGMQTSLDAAQTLIRGAVRHLNSGGELRIVANAFLPYPKILDETFGFHEVIAQTGRFKVYRTVMTRQAKK</sequence>
<reference key="1">
    <citation type="journal article" date="2008" name="Genome Res.">
        <title>Comparative genome analysis of Salmonella enteritidis PT4 and Salmonella gallinarum 287/91 provides insights into evolutionary and host adaptation pathways.</title>
        <authorList>
            <person name="Thomson N.R."/>
            <person name="Clayton D.J."/>
            <person name="Windhorst D."/>
            <person name="Vernikos G."/>
            <person name="Davidson S."/>
            <person name="Churcher C."/>
            <person name="Quail M.A."/>
            <person name="Stevens M."/>
            <person name="Jones M.A."/>
            <person name="Watson M."/>
            <person name="Barron A."/>
            <person name="Layton A."/>
            <person name="Pickard D."/>
            <person name="Kingsley R.A."/>
            <person name="Bignell A."/>
            <person name="Clark L."/>
            <person name="Harris B."/>
            <person name="Ormond D."/>
            <person name="Abdellah Z."/>
            <person name="Brooks K."/>
            <person name="Cherevach I."/>
            <person name="Chillingworth T."/>
            <person name="Woodward J."/>
            <person name="Norberczak H."/>
            <person name="Lord A."/>
            <person name="Arrowsmith C."/>
            <person name="Jagels K."/>
            <person name="Moule S."/>
            <person name="Mungall K."/>
            <person name="Saunders M."/>
            <person name="Whitehead S."/>
            <person name="Chabalgoity J.A."/>
            <person name="Maskell D."/>
            <person name="Humphreys T."/>
            <person name="Roberts M."/>
            <person name="Barrow P.A."/>
            <person name="Dougan G."/>
            <person name="Parkhill J."/>
        </authorList>
    </citation>
    <scope>NUCLEOTIDE SEQUENCE [LARGE SCALE GENOMIC DNA]</scope>
    <source>
        <strain>287/91 / NCTC 13346</strain>
    </source>
</reference>
<organism>
    <name type="scientific">Salmonella gallinarum (strain 287/91 / NCTC 13346)</name>
    <dbReference type="NCBI Taxonomy" id="550538"/>
    <lineage>
        <taxon>Bacteria</taxon>
        <taxon>Pseudomonadati</taxon>
        <taxon>Pseudomonadota</taxon>
        <taxon>Gammaproteobacteria</taxon>
        <taxon>Enterobacterales</taxon>
        <taxon>Enterobacteriaceae</taxon>
        <taxon>Salmonella</taxon>
    </lineage>
</organism>